<reference key="1">
    <citation type="journal article" date="1991" name="Nucleic Acids Res.">
        <title>Structure and expression during development of Drosophila melanogaster gene for DNA polymerase alpha.</title>
        <authorList>
            <person name="Hirose F."/>
            <person name="Yamaguchi M."/>
            <person name="Nishida Y."/>
            <person name="Masutani M."/>
            <person name="Miyazawa H."/>
            <person name="Hanaoka F."/>
            <person name="Matsukage A."/>
        </authorList>
    </citation>
    <scope>NUCLEOTIDE SEQUENCE [GENOMIC DNA]</scope>
    <scope>PROTEIN SEQUENCE OF 131-136; 181-188 AND 238-251</scope>
    <source>
        <strain>Oregon-R</strain>
    </source>
</reference>
<reference key="2">
    <citation type="journal article" date="1992" name="J. Cell Sci.">
        <title>Molecular characterisation of the gene for the 180 kDa subunit of the DNA polymerase-primase of Drosophila melanogaster.</title>
        <authorList>
            <person name="Melov S."/>
            <person name="Vaughan H."/>
            <person name="Cotterill S."/>
        </authorList>
    </citation>
    <scope>NUCLEOTIDE SEQUENCE [MRNA]</scope>
    <scope>SUBCELLULAR LOCATION</scope>
    <scope>DEVELOPMENTAL STAGE</scope>
</reference>
<reference key="3">
    <citation type="journal article" date="1999" name="Mol. Cell. Biol.">
        <title>Specification of regions of DNA replication initiation during embryogenesis in the 65-kilobase DNApolalpha-dE2F locus of Drosophila melanogaster.</title>
        <authorList>
            <person name="Sasaki T."/>
            <person name="Sawado T."/>
            <person name="Yamaguchi M."/>
            <person name="Shinomiya T."/>
        </authorList>
    </citation>
    <scope>NUCLEOTIDE SEQUENCE [GENOMIC DNA]</scope>
    <scope>FUNCTION</scope>
    <scope>SUBCELLULAR LOCATION</scope>
    <source>
        <strain>Oregon-R</strain>
    </source>
</reference>
<reference key="4">
    <citation type="journal article" date="2000" name="Science">
        <title>The genome sequence of Drosophila melanogaster.</title>
        <authorList>
            <person name="Adams M.D."/>
            <person name="Celniker S.E."/>
            <person name="Holt R.A."/>
            <person name="Evans C.A."/>
            <person name="Gocayne J.D."/>
            <person name="Amanatides P.G."/>
            <person name="Scherer S.E."/>
            <person name="Li P.W."/>
            <person name="Hoskins R.A."/>
            <person name="Galle R.F."/>
            <person name="George R.A."/>
            <person name="Lewis S.E."/>
            <person name="Richards S."/>
            <person name="Ashburner M."/>
            <person name="Henderson S.N."/>
            <person name="Sutton G.G."/>
            <person name="Wortman J.R."/>
            <person name="Yandell M.D."/>
            <person name="Zhang Q."/>
            <person name="Chen L.X."/>
            <person name="Brandon R.C."/>
            <person name="Rogers Y.-H.C."/>
            <person name="Blazej R.G."/>
            <person name="Champe M."/>
            <person name="Pfeiffer B.D."/>
            <person name="Wan K.H."/>
            <person name="Doyle C."/>
            <person name="Baxter E.G."/>
            <person name="Helt G."/>
            <person name="Nelson C.R."/>
            <person name="Miklos G.L.G."/>
            <person name="Abril J.F."/>
            <person name="Agbayani A."/>
            <person name="An H.-J."/>
            <person name="Andrews-Pfannkoch C."/>
            <person name="Baldwin D."/>
            <person name="Ballew R.M."/>
            <person name="Basu A."/>
            <person name="Baxendale J."/>
            <person name="Bayraktaroglu L."/>
            <person name="Beasley E.M."/>
            <person name="Beeson K.Y."/>
            <person name="Benos P.V."/>
            <person name="Berman B.P."/>
            <person name="Bhandari D."/>
            <person name="Bolshakov S."/>
            <person name="Borkova D."/>
            <person name="Botchan M.R."/>
            <person name="Bouck J."/>
            <person name="Brokstein P."/>
            <person name="Brottier P."/>
            <person name="Burtis K.C."/>
            <person name="Busam D.A."/>
            <person name="Butler H."/>
            <person name="Cadieu E."/>
            <person name="Center A."/>
            <person name="Chandra I."/>
            <person name="Cherry J.M."/>
            <person name="Cawley S."/>
            <person name="Dahlke C."/>
            <person name="Davenport L.B."/>
            <person name="Davies P."/>
            <person name="de Pablos B."/>
            <person name="Delcher A."/>
            <person name="Deng Z."/>
            <person name="Mays A.D."/>
            <person name="Dew I."/>
            <person name="Dietz S.M."/>
            <person name="Dodson K."/>
            <person name="Doup L.E."/>
            <person name="Downes M."/>
            <person name="Dugan-Rocha S."/>
            <person name="Dunkov B.C."/>
            <person name="Dunn P."/>
            <person name="Durbin K.J."/>
            <person name="Evangelista C.C."/>
            <person name="Ferraz C."/>
            <person name="Ferriera S."/>
            <person name="Fleischmann W."/>
            <person name="Fosler C."/>
            <person name="Gabrielian A.E."/>
            <person name="Garg N.S."/>
            <person name="Gelbart W.M."/>
            <person name="Glasser K."/>
            <person name="Glodek A."/>
            <person name="Gong F."/>
            <person name="Gorrell J.H."/>
            <person name="Gu Z."/>
            <person name="Guan P."/>
            <person name="Harris M."/>
            <person name="Harris N.L."/>
            <person name="Harvey D.A."/>
            <person name="Heiman T.J."/>
            <person name="Hernandez J.R."/>
            <person name="Houck J."/>
            <person name="Hostin D."/>
            <person name="Houston K.A."/>
            <person name="Howland T.J."/>
            <person name="Wei M.-H."/>
            <person name="Ibegwam C."/>
            <person name="Jalali M."/>
            <person name="Kalush F."/>
            <person name="Karpen G.H."/>
            <person name="Ke Z."/>
            <person name="Kennison J.A."/>
            <person name="Ketchum K.A."/>
            <person name="Kimmel B.E."/>
            <person name="Kodira C.D."/>
            <person name="Kraft C.L."/>
            <person name="Kravitz S."/>
            <person name="Kulp D."/>
            <person name="Lai Z."/>
            <person name="Lasko P."/>
            <person name="Lei Y."/>
            <person name="Levitsky A.A."/>
            <person name="Li J.H."/>
            <person name="Li Z."/>
            <person name="Liang Y."/>
            <person name="Lin X."/>
            <person name="Liu X."/>
            <person name="Mattei B."/>
            <person name="McIntosh T.C."/>
            <person name="McLeod M.P."/>
            <person name="McPherson D."/>
            <person name="Merkulov G."/>
            <person name="Milshina N.V."/>
            <person name="Mobarry C."/>
            <person name="Morris J."/>
            <person name="Moshrefi A."/>
            <person name="Mount S.M."/>
            <person name="Moy M."/>
            <person name="Murphy B."/>
            <person name="Murphy L."/>
            <person name="Muzny D.M."/>
            <person name="Nelson D.L."/>
            <person name="Nelson D.R."/>
            <person name="Nelson K.A."/>
            <person name="Nixon K."/>
            <person name="Nusskern D.R."/>
            <person name="Pacleb J.M."/>
            <person name="Palazzolo M."/>
            <person name="Pittman G.S."/>
            <person name="Pan S."/>
            <person name="Pollard J."/>
            <person name="Puri V."/>
            <person name="Reese M.G."/>
            <person name="Reinert K."/>
            <person name="Remington K."/>
            <person name="Saunders R.D.C."/>
            <person name="Scheeler F."/>
            <person name="Shen H."/>
            <person name="Shue B.C."/>
            <person name="Siden-Kiamos I."/>
            <person name="Simpson M."/>
            <person name="Skupski M.P."/>
            <person name="Smith T.J."/>
            <person name="Spier E."/>
            <person name="Spradling A.C."/>
            <person name="Stapleton M."/>
            <person name="Strong R."/>
            <person name="Sun E."/>
            <person name="Svirskas R."/>
            <person name="Tector C."/>
            <person name="Turner R."/>
            <person name="Venter E."/>
            <person name="Wang A.H."/>
            <person name="Wang X."/>
            <person name="Wang Z.-Y."/>
            <person name="Wassarman D.A."/>
            <person name="Weinstock G.M."/>
            <person name="Weissenbach J."/>
            <person name="Williams S.M."/>
            <person name="Woodage T."/>
            <person name="Worley K.C."/>
            <person name="Wu D."/>
            <person name="Yang S."/>
            <person name="Yao Q.A."/>
            <person name="Ye J."/>
            <person name="Yeh R.-F."/>
            <person name="Zaveri J.S."/>
            <person name="Zhan M."/>
            <person name="Zhang G."/>
            <person name="Zhao Q."/>
            <person name="Zheng L."/>
            <person name="Zheng X.H."/>
            <person name="Zhong F.N."/>
            <person name="Zhong W."/>
            <person name="Zhou X."/>
            <person name="Zhu S.C."/>
            <person name="Zhu X."/>
            <person name="Smith H.O."/>
            <person name="Gibbs R.A."/>
            <person name="Myers E.W."/>
            <person name="Rubin G.M."/>
            <person name="Venter J.C."/>
        </authorList>
    </citation>
    <scope>NUCLEOTIDE SEQUENCE [LARGE SCALE GENOMIC DNA]</scope>
    <source>
        <strain>Berkeley</strain>
    </source>
</reference>
<reference key="5">
    <citation type="journal article" date="2002" name="Genome Biol.">
        <title>Annotation of the Drosophila melanogaster euchromatic genome: a systematic review.</title>
        <authorList>
            <person name="Misra S."/>
            <person name="Crosby M.A."/>
            <person name="Mungall C.J."/>
            <person name="Matthews B.B."/>
            <person name="Campbell K.S."/>
            <person name="Hradecky P."/>
            <person name="Huang Y."/>
            <person name="Kaminker J.S."/>
            <person name="Millburn G.H."/>
            <person name="Prochnik S.E."/>
            <person name="Smith C.D."/>
            <person name="Tupy J.L."/>
            <person name="Whitfield E.J."/>
            <person name="Bayraktaroglu L."/>
            <person name="Berman B.P."/>
            <person name="Bettencourt B.R."/>
            <person name="Celniker S.E."/>
            <person name="de Grey A.D.N.J."/>
            <person name="Drysdale R.A."/>
            <person name="Harris N.L."/>
            <person name="Richter J."/>
            <person name="Russo S."/>
            <person name="Schroeder A.J."/>
            <person name="Shu S.Q."/>
            <person name="Stapleton M."/>
            <person name="Yamada C."/>
            <person name="Ashburner M."/>
            <person name="Gelbart W.M."/>
            <person name="Rubin G.M."/>
            <person name="Lewis S.E."/>
        </authorList>
    </citation>
    <scope>GENOME REANNOTATION</scope>
    <source>
        <strain>Berkeley</strain>
    </source>
</reference>
<reference key="6">
    <citation type="journal article" date="2002" name="Genome Biol.">
        <title>A Drosophila full-length cDNA resource.</title>
        <authorList>
            <person name="Stapleton M."/>
            <person name="Carlson J.W."/>
            <person name="Brokstein P."/>
            <person name="Yu C."/>
            <person name="Champe M."/>
            <person name="George R.A."/>
            <person name="Guarin H."/>
            <person name="Kronmiller B."/>
            <person name="Pacleb J.M."/>
            <person name="Park S."/>
            <person name="Wan K.H."/>
            <person name="Rubin G.M."/>
            <person name="Celniker S.E."/>
        </authorList>
    </citation>
    <scope>NUCLEOTIDE SEQUENCE [LARGE SCALE MRNA] OF 710-1488</scope>
    <source>
        <strain>Berkeley</strain>
        <tissue>Ovary</tissue>
    </source>
</reference>
<reference key="7">
    <citation type="journal article" date="1980" name="J. Biol. Chem.">
        <title>DNA polymerase alpha from Drosophila melanogaster embryos. Subunit structure.</title>
        <authorList>
            <person name="Villani G."/>
            <person name="Sauer B."/>
            <person name="Lehman I.R."/>
        </authorList>
    </citation>
    <scope>FUNCTION</scope>
    <scope>CATALYTIC ACTIVITY</scope>
    <scope>IDENTIFICATION IN THE DNA POLYMERASE ALPHA COMPLEX</scope>
    <scope>TISSUE SPECIFICITY</scope>
</reference>
<reference key="8">
    <citation type="journal article" date="1982" name="Proc. Natl. Acad. Sci. U.S.A.">
        <title>A DNA primase activity associated with DNA polymerase alpha from Drosophila melanogaster embryos.</title>
        <authorList>
            <person name="Conaway R.C."/>
            <person name="Lehman I.R."/>
        </authorList>
    </citation>
    <scope>FUNCTION</scope>
    <scope>CATALYTIC ACTIVITY</scope>
    <scope>ACTIVITY REGULATION</scope>
</reference>
<reference key="9">
    <citation type="journal article" date="1983" name="Proc. Natl. Acad. Sci. U.S.A.">
        <title>Isolation of an intact DNA polymerase-primase from embryos of Drosophila melanogaster.</title>
        <authorList>
            <person name="Kaguni L.S."/>
            <person name="Rossignol J.M."/>
            <person name="Conaway R.C."/>
            <person name="Lehman I.R."/>
        </authorList>
    </citation>
    <scope>FUNCTION</scope>
    <scope>IDENTIFICATION IN THE DNA POLYMERASE ALPHA COMPLEX</scope>
    <scope>TISSUE SPECIFICITY</scope>
</reference>
<reference key="10">
    <citation type="journal article" date="1983" name="J. Biol. Chem.">
        <title>Association of DNA primase with the beta/gamma subunits of DNA polymerase alpha from Drosophila melanogaster embryos.</title>
        <authorList>
            <person name="Kaguni L.S."/>
            <person name="Rossignol J.M."/>
            <person name="Conaway R.C."/>
            <person name="Banks G.R."/>
            <person name="Lehman I.R."/>
        </authorList>
    </citation>
    <scope>FUNCTION</scope>
    <scope>CATALYTIC ACTIVITY</scope>
    <scope>IDENTIFICATION IN THE DNA POLYMERASE ALPHA COMPLEX</scope>
    <scope>TISSUE SPECIFICITY</scope>
</reference>
<reference key="11">
    <citation type="journal article" date="1987" name="Proc. Natl. Acad. Sci. U.S.A.">
        <title>A cryptic proofreading 3'----5' exonuclease associated with the polymerase subunit of the DNA polymerase-primase from Drosophila melanogaster.</title>
        <authorList>
            <person name="Cotterill S.M."/>
            <person name="Reyland M.E."/>
            <person name="Loeb L.A."/>
            <person name="Lehman I.R."/>
        </authorList>
    </citation>
    <scope>FUNCTION</scope>
    <scope>CATALYTIC ACTIVITY</scope>
</reference>
<reference key="12">
    <citation type="journal article" date="1988" name="J. Biol. Chem.">
        <title>Specificity of proofreading by the 3'----5' exonuclease of the DNA polymerase-primase of Drosophila melanogaster.</title>
        <authorList>
            <person name="Reyland M.E."/>
            <person name="Lehman I.R."/>
            <person name="Loeb L.A."/>
        </authorList>
    </citation>
    <scope>FUNCTION</scope>
    <scope>CATALYTIC ACTIVITY</scope>
    <scope>ACTIVITY REGULATION</scope>
</reference>
<reference key="13">
    <citation type="journal article" date="1995" name="J. Biochem.">
        <title>A 130 kDa polypeptide immunologically related to the 180 kDa catalytic subunit of DNA polymerase alpha-primase complex is detected in early embryos of Drosophila.</title>
        <authorList>
            <person name="Kuroda K."/>
            <person name="Ueda R."/>
        </authorList>
    </citation>
    <scope>FUNCTION</scope>
    <scope>CATALYTIC ACTIVITY</scope>
    <scope>SUBCELLULAR LOCATION</scope>
    <scope>TISSUE SPECIFICITY</scope>
    <scope>PROTEOLYTIC CLEAVAGE</scope>
</reference>
<reference key="14">
    <citation type="journal article" date="2001" name="J. Cell Sci.">
        <title>The Drosophila Dpit47 protein is a nuclear Hsp90 co-chaperone that interacts with DNA polymerase alpha.</title>
        <authorList>
            <person name="Crevel G."/>
            <person name="Bates H."/>
            <person name="Huikeshoven H."/>
            <person name="Cotterill S."/>
        </authorList>
    </citation>
    <scope>INTERACTION WITH DPIT47</scope>
</reference>
<reference key="15">
    <citation type="journal article" date="2008" name="J. Proteome Res.">
        <title>Phosphoproteome analysis of Drosophila melanogaster embryos.</title>
        <authorList>
            <person name="Zhai B."/>
            <person name="Villen J."/>
            <person name="Beausoleil S.A."/>
            <person name="Mintseris J."/>
            <person name="Gygi S.P."/>
        </authorList>
    </citation>
    <scope>PHOSPHORYLATION [LARGE SCALE ANALYSIS] AT SER-239; SER-262; SER-269; THR-314 AND SER-317</scope>
    <scope>IDENTIFICATION BY MASS SPECTROMETRY</scope>
    <source>
        <tissue>Embryo</tissue>
    </source>
</reference>
<accession>P26019</accession>
<accession>O77034</accession>
<accession>Q8T992</accession>
<accession>Q9VD90</accession>
<name>DPOLA_DROME</name>
<organism>
    <name type="scientific">Drosophila melanogaster</name>
    <name type="common">Fruit fly</name>
    <dbReference type="NCBI Taxonomy" id="7227"/>
    <lineage>
        <taxon>Eukaryota</taxon>
        <taxon>Metazoa</taxon>
        <taxon>Ecdysozoa</taxon>
        <taxon>Arthropoda</taxon>
        <taxon>Hexapoda</taxon>
        <taxon>Insecta</taxon>
        <taxon>Pterygota</taxon>
        <taxon>Neoptera</taxon>
        <taxon>Endopterygota</taxon>
        <taxon>Diptera</taxon>
        <taxon>Brachycera</taxon>
        <taxon>Muscomorpha</taxon>
        <taxon>Ephydroidea</taxon>
        <taxon>Drosophilidae</taxon>
        <taxon>Drosophila</taxon>
        <taxon>Sophophora</taxon>
    </lineage>
</organism>
<protein>
    <recommendedName>
        <fullName>DNA polymerase alpha catalytic subunit</fullName>
        <ecNumber evidence="11 12 13 14">2.7.7.7</ecNumber>
    </recommendedName>
    <alternativeName>
        <fullName evidence="17">3'-5' exodeoxyribonuclease</fullName>
        <ecNumber evidence="8 9">3.1.11.-</ecNumber>
    </alternativeName>
</protein>
<dbReference type="EC" id="2.7.7.7" evidence="11 12 13 14"/>
<dbReference type="EC" id="3.1.11.-" evidence="8 9"/>
<dbReference type="EMBL" id="D90310">
    <property type="protein sequence ID" value="BAA14340.1"/>
    <property type="status" value="ALT_SEQ"/>
    <property type="molecule type" value="Genomic_DNA"/>
</dbReference>
<dbReference type="EMBL" id="S48157">
    <property type="status" value="NOT_ANNOTATED_CDS"/>
    <property type="molecule type" value="mRNA"/>
</dbReference>
<dbReference type="EMBL" id="AB011813">
    <property type="protein sequence ID" value="BAA32745.1"/>
    <property type="status" value="ALT_SEQ"/>
    <property type="molecule type" value="Genomic_DNA"/>
</dbReference>
<dbReference type="EMBL" id="AE014297">
    <property type="protein sequence ID" value="AAF55908.2"/>
    <property type="molecule type" value="Genomic_DNA"/>
</dbReference>
<dbReference type="EMBL" id="AY070529">
    <property type="protein sequence ID" value="AAL48000.1"/>
    <property type="status" value="ALT_INIT"/>
    <property type="molecule type" value="mRNA"/>
</dbReference>
<dbReference type="PIR" id="S28079">
    <property type="entry name" value="S28079"/>
</dbReference>
<dbReference type="RefSeq" id="NP_536736.2">
    <property type="nucleotide sequence ID" value="NM_080488.3"/>
</dbReference>
<dbReference type="SMR" id="P26019"/>
<dbReference type="BioGRID" id="67519">
    <property type="interactions" value="15"/>
</dbReference>
<dbReference type="ComplexPortal" id="CPX-2090">
    <property type="entry name" value="DNA polymerase alpha:primase complex"/>
</dbReference>
<dbReference type="DIP" id="DIP-23937N"/>
<dbReference type="FunCoup" id="P26019">
    <property type="interactions" value="1740"/>
</dbReference>
<dbReference type="IntAct" id="P26019">
    <property type="interactions" value="6"/>
</dbReference>
<dbReference type="STRING" id="7227.FBpp0083514"/>
<dbReference type="BindingDB" id="P26019"/>
<dbReference type="ChEMBL" id="CHEMBL6039"/>
<dbReference type="GlyGen" id="P26019">
    <property type="glycosylation" value="1 site"/>
</dbReference>
<dbReference type="iPTMnet" id="P26019"/>
<dbReference type="PaxDb" id="7227-FBpp0083514"/>
<dbReference type="EnsemblMetazoa" id="FBtr0084115">
    <property type="protein sequence ID" value="FBpp0083514"/>
    <property type="gene ID" value="FBgn0259113"/>
</dbReference>
<dbReference type="GeneID" id="42553"/>
<dbReference type="KEGG" id="dme:Dmel_CG6349"/>
<dbReference type="AGR" id="FB:FBgn0259113"/>
<dbReference type="CTD" id="5422"/>
<dbReference type="FlyBase" id="FBgn0259113">
    <property type="gene designation" value="PolA1"/>
</dbReference>
<dbReference type="VEuPathDB" id="VectorBase:FBgn0259113"/>
<dbReference type="eggNOG" id="KOG0970">
    <property type="taxonomic scope" value="Eukaryota"/>
</dbReference>
<dbReference type="GeneTree" id="ENSGT00550000074891"/>
<dbReference type="HOGENOM" id="CLU_001718_0_0_1"/>
<dbReference type="InParanoid" id="P26019"/>
<dbReference type="OMA" id="MTKMNVG"/>
<dbReference type="OrthoDB" id="6755010at2759"/>
<dbReference type="PhylomeDB" id="P26019"/>
<dbReference type="Reactome" id="R-DME-113501">
    <property type="pathway name" value="Inhibition of replication initiation of damaged DNA by RB1/E2F1"/>
</dbReference>
<dbReference type="Reactome" id="R-DME-68952">
    <property type="pathway name" value="DNA replication initiation"/>
</dbReference>
<dbReference type="Reactome" id="R-DME-68962">
    <property type="pathway name" value="Activation of the pre-replicative complex"/>
</dbReference>
<dbReference type="Reactome" id="R-DME-69091">
    <property type="pathway name" value="Polymerase switching"/>
</dbReference>
<dbReference type="Reactome" id="R-DME-69166">
    <property type="pathway name" value="Removal of the Flap Intermediate"/>
</dbReference>
<dbReference type="Reactome" id="R-DME-69183">
    <property type="pathway name" value="Processive synthesis on the lagging strand"/>
</dbReference>
<dbReference type="SignaLink" id="P26019"/>
<dbReference type="BioGRID-ORCS" id="42553">
    <property type="hits" value="0 hits in 3 CRISPR screens"/>
</dbReference>
<dbReference type="ChiTaRS" id="DNApol-alpha50">
    <property type="organism name" value="fly"/>
</dbReference>
<dbReference type="GenomeRNAi" id="42553"/>
<dbReference type="PRO" id="PR:P26019"/>
<dbReference type="Proteomes" id="UP000000803">
    <property type="component" value="Chromosome 3R"/>
</dbReference>
<dbReference type="Bgee" id="FBgn0259113">
    <property type="expression patterns" value="Expressed in posterior terminal follicle cell in ovary and 29 other cell types or tissues"/>
</dbReference>
<dbReference type="GO" id="GO:0005658">
    <property type="term" value="C:alpha DNA polymerase:primase complex"/>
    <property type="evidence" value="ECO:0000314"/>
    <property type="project" value="FlyBase"/>
</dbReference>
<dbReference type="GO" id="GO:0005634">
    <property type="term" value="C:nucleus"/>
    <property type="evidence" value="ECO:0000314"/>
    <property type="project" value="FlyBase"/>
</dbReference>
<dbReference type="GO" id="GO:0008296">
    <property type="term" value="F:3'-5'-DNA exonuclease activity"/>
    <property type="evidence" value="ECO:0000314"/>
    <property type="project" value="FlyBase"/>
</dbReference>
<dbReference type="GO" id="GO:0003682">
    <property type="term" value="F:chromatin binding"/>
    <property type="evidence" value="ECO:0000318"/>
    <property type="project" value="GO_Central"/>
</dbReference>
<dbReference type="GO" id="GO:0016895">
    <property type="term" value="F:DNA exonuclease activity, producing 5'-phosphomonoesters"/>
    <property type="evidence" value="ECO:0000314"/>
    <property type="project" value="UniProtKB"/>
</dbReference>
<dbReference type="GO" id="GO:0003688">
    <property type="term" value="F:DNA replication origin binding"/>
    <property type="evidence" value="ECO:0000318"/>
    <property type="project" value="GO_Central"/>
</dbReference>
<dbReference type="GO" id="GO:0003887">
    <property type="term" value="F:DNA-directed DNA polymerase activity"/>
    <property type="evidence" value="ECO:0000314"/>
    <property type="project" value="FlyBase"/>
</dbReference>
<dbReference type="GO" id="GO:0000166">
    <property type="term" value="F:nucleotide binding"/>
    <property type="evidence" value="ECO:0007669"/>
    <property type="project" value="InterPro"/>
</dbReference>
<dbReference type="GO" id="GO:0003697">
    <property type="term" value="F:single-stranded DNA binding"/>
    <property type="evidence" value="ECO:0000318"/>
    <property type="project" value="GO_Central"/>
</dbReference>
<dbReference type="GO" id="GO:0008270">
    <property type="term" value="F:zinc ion binding"/>
    <property type="evidence" value="ECO:0007669"/>
    <property type="project" value="UniProtKB-KW"/>
</dbReference>
<dbReference type="GO" id="GO:0006270">
    <property type="term" value="P:DNA replication initiation"/>
    <property type="evidence" value="ECO:0000314"/>
    <property type="project" value="ComplexPortal"/>
</dbReference>
<dbReference type="GO" id="GO:0045004">
    <property type="term" value="P:DNA replication proofreading"/>
    <property type="evidence" value="ECO:0000314"/>
    <property type="project" value="FlyBase"/>
</dbReference>
<dbReference type="GO" id="GO:0006261">
    <property type="term" value="P:DNA-templated DNA replication"/>
    <property type="evidence" value="ECO:0000314"/>
    <property type="project" value="FlyBase"/>
</dbReference>
<dbReference type="GO" id="GO:0006273">
    <property type="term" value="P:lagging strand elongation"/>
    <property type="evidence" value="ECO:0000318"/>
    <property type="project" value="GO_Central"/>
</dbReference>
<dbReference type="GO" id="GO:0006272">
    <property type="term" value="P:leading strand elongation"/>
    <property type="evidence" value="ECO:0000318"/>
    <property type="project" value="GO_Central"/>
</dbReference>
<dbReference type="GO" id="GO:1902975">
    <property type="term" value="P:mitotic DNA replication initiation"/>
    <property type="evidence" value="ECO:0000318"/>
    <property type="project" value="GO_Central"/>
</dbReference>
<dbReference type="CDD" id="cd05776">
    <property type="entry name" value="DNA_polB_alpha_exo"/>
    <property type="match status" value="1"/>
</dbReference>
<dbReference type="CDD" id="cd05532">
    <property type="entry name" value="POLBc_alpha"/>
    <property type="match status" value="1"/>
</dbReference>
<dbReference type="FunFam" id="1.10.132.60:FF:000004">
    <property type="entry name" value="DNA polymerase"/>
    <property type="match status" value="1"/>
</dbReference>
<dbReference type="FunFam" id="1.10.287.690:FF:000003">
    <property type="entry name" value="DNA polymerase"/>
    <property type="match status" value="1"/>
</dbReference>
<dbReference type="FunFam" id="3.30.420.10:FF:000151">
    <property type="entry name" value="DNA polymerase"/>
    <property type="match status" value="1"/>
</dbReference>
<dbReference type="Gene3D" id="2.40.50.730">
    <property type="match status" value="1"/>
</dbReference>
<dbReference type="Gene3D" id="3.30.70.2820">
    <property type="match status" value="1"/>
</dbReference>
<dbReference type="Gene3D" id="1.10.3200.20">
    <property type="entry name" value="DNA Polymerase alpha, zinc finger"/>
    <property type="match status" value="1"/>
</dbReference>
<dbReference type="Gene3D" id="1.10.132.60">
    <property type="entry name" value="DNA polymerase family B, C-terminal domain"/>
    <property type="match status" value="1"/>
</dbReference>
<dbReference type="Gene3D" id="3.90.1600.10">
    <property type="entry name" value="Palm domain of DNA polymerase"/>
    <property type="match status" value="2"/>
</dbReference>
<dbReference type="Gene3D" id="3.30.420.10">
    <property type="entry name" value="Ribonuclease H-like superfamily/Ribonuclease H"/>
    <property type="match status" value="1"/>
</dbReference>
<dbReference type="InterPro" id="IPR006172">
    <property type="entry name" value="DNA-dir_DNA_pol_B"/>
</dbReference>
<dbReference type="InterPro" id="IPR017964">
    <property type="entry name" value="DNA-dir_DNA_pol_B_CS"/>
</dbReference>
<dbReference type="InterPro" id="IPR006133">
    <property type="entry name" value="DNA-dir_DNA_pol_B_exonuc"/>
</dbReference>
<dbReference type="InterPro" id="IPR006134">
    <property type="entry name" value="DNA-dir_DNA_pol_B_multi_dom"/>
</dbReference>
<dbReference type="InterPro" id="IPR043502">
    <property type="entry name" value="DNA/RNA_pol_sf"/>
</dbReference>
<dbReference type="InterPro" id="IPR024647">
    <property type="entry name" value="DNA_pol_a_cat_su_N"/>
</dbReference>
<dbReference type="InterPro" id="IPR042087">
    <property type="entry name" value="DNA_pol_B_thumb"/>
</dbReference>
<dbReference type="InterPro" id="IPR023211">
    <property type="entry name" value="DNA_pol_palm_dom_sf"/>
</dbReference>
<dbReference type="InterPro" id="IPR038256">
    <property type="entry name" value="Pol_alpha_znc_sf"/>
</dbReference>
<dbReference type="InterPro" id="IPR045846">
    <property type="entry name" value="POLBc_alpha"/>
</dbReference>
<dbReference type="InterPro" id="IPR012337">
    <property type="entry name" value="RNaseH-like_sf"/>
</dbReference>
<dbReference type="InterPro" id="IPR036397">
    <property type="entry name" value="RNaseH_sf"/>
</dbReference>
<dbReference type="InterPro" id="IPR015088">
    <property type="entry name" value="Znf_DNA-dir_DNA_pol_B_alpha"/>
</dbReference>
<dbReference type="NCBIfam" id="TIGR00592">
    <property type="entry name" value="pol2"/>
    <property type="match status" value="1"/>
</dbReference>
<dbReference type="PANTHER" id="PTHR45861">
    <property type="entry name" value="DNA POLYMERASE ALPHA CATALYTIC SUBUNIT"/>
    <property type="match status" value="1"/>
</dbReference>
<dbReference type="PANTHER" id="PTHR45861:SF1">
    <property type="entry name" value="DNA POLYMERASE ALPHA CATALYTIC SUBUNIT"/>
    <property type="match status" value="1"/>
</dbReference>
<dbReference type="Pfam" id="PF12254">
    <property type="entry name" value="DNA_pol_alpha_N"/>
    <property type="match status" value="1"/>
</dbReference>
<dbReference type="Pfam" id="PF00136">
    <property type="entry name" value="DNA_pol_B"/>
    <property type="match status" value="1"/>
</dbReference>
<dbReference type="Pfam" id="PF03104">
    <property type="entry name" value="DNA_pol_B_exo1"/>
    <property type="match status" value="1"/>
</dbReference>
<dbReference type="Pfam" id="PF08996">
    <property type="entry name" value="zf-DNA_Pol"/>
    <property type="match status" value="1"/>
</dbReference>
<dbReference type="PRINTS" id="PR00106">
    <property type="entry name" value="DNAPOLB"/>
</dbReference>
<dbReference type="SMART" id="SM00486">
    <property type="entry name" value="POLBc"/>
    <property type="match status" value="1"/>
</dbReference>
<dbReference type="SUPFAM" id="SSF56672">
    <property type="entry name" value="DNA/RNA polymerases"/>
    <property type="match status" value="1"/>
</dbReference>
<dbReference type="SUPFAM" id="SSF53098">
    <property type="entry name" value="Ribonuclease H-like"/>
    <property type="match status" value="1"/>
</dbReference>
<dbReference type="PROSITE" id="PS00116">
    <property type="entry name" value="DNA_POLYMERASE_B"/>
    <property type="match status" value="1"/>
</dbReference>
<gene>
    <name evidence="18" type="primary">PolA1</name>
    <name evidence="18" type="synonym">DNApol-alpha</name>
    <name evidence="18" type="synonym">DNApol-alpha180</name>
    <name evidence="18" type="synonym">POLA</name>
    <name evidence="18" type="ORF">CG6349</name>
</gene>
<evidence type="ECO:0000250" key="1">
    <source>
        <dbReference type="UniProtKB" id="P09884"/>
    </source>
</evidence>
<evidence type="ECO:0000250" key="2">
    <source>
        <dbReference type="UniProtKB" id="P15436"/>
    </source>
</evidence>
<evidence type="ECO:0000255" key="3"/>
<evidence type="ECO:0000256" key="4">
    <source>
        <dbReference type="SAM" id="MobiDB-lite"/>
    </source>
</evidence>
<evidence type="ECO:0000269" key="5">
    <source>
    </source>
</evidence>
<evidence type="ECO:0000269" key="6">
    <source>
    </source>
</evidence>
<evidence type="ECO:0000269" key="7">
    <source>
    </source>
</evidence>
<evidence type="ECO:0000269" key="8">
    <source>
    </source>
</evidence>
<evidence type="ECO:0000269" key="9">
    <source>
    </source>
</evidence>
<evidence type="ECO:0000269" key="10">
    <source>
    </source>
</evidence>
<evidence type="ECO:0000269" key="11">
    <source>
    </source>
</evidence>
<evidence type="ECO:0000269" key="12">
    <source>
    </source>
</evidence>
<evidence type="ECO:0000269" key="13">
    <source>
    </source>
</evidence>
<evidence type="ECO:0000269" key="14">
    <source>
    </source>
</evidence>
<evidence type="ECO:0000269" key="15">
    <source>
    </source>
</evidence>
<evidence type="ECO:0000303" key="16">
    <source>
    </source>
</evidence>
<evidence type="ECO:0000305" key="17"/>
<evidence type="ECO:0000312" key="18">
    <source>
        <dbReference type="FlyBase" id="FBgn0259113"/>
    </source>
</evidence>
<keyword id="KW-0903">Direct protein sequencing</keyword>
<keyword id="KW-0227">DNA damage</keyword>
<keyword id="KW-0234">DNA repair</keyword>
<keyword id="KW-0235">DNA replication</keyword>
<keyword id="KW-0238">DNA-binding</keyword>
<keyword id="KW-0239">DNA-directed DNA polymerase</keyword>
<keyword id="KW-0269">Exonuclease</keyword>
<keyword id="KW-0378">Hydrolase</keyword>
<keyword id="KW-0479">Metal-binding</keyword>
<keyword id="KW-0511">Multifunctional enzyme</keyword>
<keyword id="KW-0540">Nuclease</keyword>
<keyword id="KW-0548">Nucleotidyltransferase</keyword>
<keyword id="KW-0539">Nucleus</keyword>
<keyword id="KW-0597">Phosphoprotein</keyword>
<keyword id="KW-1185">Reference proteome</keyword>
<keyword id="KW-0808">Transferase</keyword>
<keyword id="KW-0862">Zinc</keyword>
<keyword id="KW-0863">Zinc-finger</keyword>
<sequence>MSESPSEPRAKRQRVDKNGRFAAMERLRQLKGTKNKCKVEDQVDDVYDVVDEREYAKRAQEKYGDDWIEEDGTGYAEDLRDFFEDEDEYSDGEEDRKDSKKKKGVAPNSKKRPRENEKPVTGKASIKNLFSNAVPKKMDVKTSVKDDDILADILGEIKEEPAATSEKAEKVIAPAKISVTSRKFDAAAAKEYMNSFLNNIKVQEQERKKAEASSDNEMLERILKPKAAVPNTKVAFFSSPTIKKEPMPEKTPAKKATEDPFSDNEMDFSCLDDDENQFDVEKTQQTEKVSQTKTAAEKTSQSKVAEKSAPKKETTGSPKESESEDISRLLNNWESICQMDDDFEKSVLTTEQDSTISSDQQLRFWYWEAYEDPVKMPGEVFLFGRTADGKSVCLRVQNINRVLYLLPRQFLLDPISKEPTKQKVTVADIYKEFDSEVANQLKLEFFRSRKVTKSFAHHAIGIEVPQSCDYLEVHYDGKKPLPNLSADKKYNSIAHIFGATTNALERFLLDRKIKGPCWLQVTGFKVSPTPMSWCNTEVTLTEPKNVELVQDKGKPAPPPPLTLLSLNVRTSMNPKTSRNEICMISMLTHNRFHIDRPAPQPAFNRHMCALTRPAVVSWPLDLNFEMAKYKSTTVHKHDSERALLSWFLAQYQKIDADLIVTFDSMDCQLNVITDQIVALKIPQWSRMGRLRLSQSFGKRLLEHFVGRMVCDVKRSAEECIRARSYDLQTLCKQVLKLKESERMEVNADDLLEMYEKGESITKLISLTMQDNSYLLRLMCELNIMPLALQITNICGNTMTRTLQGGRSERNEFLLLHAFHEKNYIVPDKKPVSKRSGAGDTDATLSGADATMQTKKKAAYAGGLVLEPMRGLYEKYVLLMDFNSLYPSIIQEYNICFTTVQQPVDADELPTLPDSKTEPGILPLQLKRLVESRKEVKKLMAAPDLSPELQMQYHIRQMALKLTANSMYGCLGFAHSRFFAQHLAALVTHKGREILTNTQQLVQKMNYDVVYGDTDSLMINTNITDYDQVYKIGHNIKQSVNKLYKQLELDIDGVFGCLLLLKKKKYAAIKLSKDSKGNLRREQEHKGLDIVRRDWSQLAVMVGKAVLDEVLSEKPLEEKLDAVHAQLEKIKTQIAEGVVPLPLFVITKQLTRTPQEYANSASLPHVQVALRMNRERNRRYKKGDMVDYVICLDGTTNAAMQRAYHLDELKTSEDKKLQLDTNYYLGHQIHPVVTRMVEVLEGTDASRIAECLGMDPTKFRQNAQRTQRENTEQSEGESLLKTTLQLYRLCEPFRFQCVTCKTEQLMASAYRPGPSNSHIAVLQQCAKSECQTAPIQYLASVRNQLQLSMRQYVQRFYKNWLVCDHPDCNFNTRTHSLRKKSHRPLCQKCRSGSLLRQYTERDLYNQLCYLRFMFDLGKQTLQQKPTLTPELEQAYQLLYETVDQQLQSSSYVIISLSKLFARSLAQMSLQPSVAQPQIEAIPSALADVV</sequence>
<proteinExistence type="evidence at protein level"/>
<feature type="chain" id="PRO_0000046432" description="DNA polymerase alpha catalytic subunit">
    <location>
        <begin position="1"/>
        <end position="1488"/>
    </location>
</feature>
<feature type="zinc finger region" description="CysA-type" evidence="2">
    <location>
        <begin position="1296"/>
        <end position="1327"/>
    </location>
</feature>
<feature type="region of interest" description="Disordered" evidence="4">
    <location>
        <begin position="1"/>
        <end position="22"/>
    </location>
</feature>
<feature type="region of interest" description="Disordered" evidence="4">
    <location>
        <begin position="79"/>
        <end position="124"/>
    </location>
</feature>
<feature type="region of interest" description="Disordered" evidence="4">
    <location>
        <begin position="236"/>
        <end position="325"/>
    </location>
</feature>
<feature type="region of interest" description="Contains conserved residues essential for 3' -&gt; 5' exonuclease activities" evidence="16">
    <location>
        <begin position="638"/>
        <end position="758"/>
    </location>
</feature>
<feature type="region of interest" description="DNA-binding" evidence="3">
    <location>
        <begin position="675"/>
        <end position="734"/>
    </location>
</feature>
<feature type="region of interest" description="DNA-binding" evidence="3">
    <location>
        <begin position="1255"/>
        <end position="1380"/>
    </location>
</feature>
<feature type="short sequence motif" description="Nuclear localization signal" evidence="3">
    <location>
        <begin position="96"/>
        <end position="103"/>
    </location>
</feature>
<feature type="short sequence motif" description="CysB motif" evidence="2">
    <location>
        <begin position="1362"/>
        <end position="1388"/>
    </location>
</feature>
<feature type="compositionally biased region" description="Acidic residues" evidence="4">
    <location>
        <begin position="83"/>
        <end position="93"/>
    </location>
</feature>
<feature type="compositionally biased region" description="Basic residues" evidence="4">
    <location>
        <begin position="99"/>
        <end position="113"/>
    </location>
</feature>
<feature type="compositionally biased region" description="Basic and acidic residues" evidence="4">
    <location>
        <begin position="242"/>
        <end position="258"/>
    </location>
</feature>
<feature type="compositionally biased region" description="Acidic residues" evidence="4">
    <location>
        <begin position="260"/>
        <end position="278"/>
    </location>
</feature>
<feature type="compositionally biased region" description="Polar residues" evidence="4">
    <location>
        <begin position="286"/>
        <end position="303"/>
    </location>
</feature>
<feature type="compositionally biased region" description="Basic and acidic residues" evidence="4">
    <location>
        <begin position="304"/>
        <end position="325"/>
    </location>
</feature>
<feature type="binding site" evidence="1">
    <location>
        <position position="1296"/>
    </location>
    <ligand>
        <name>Zn(2+)</name>
        <dbReference type="ChEBI" id="CHEBI:29105"/>
        <label>1</label>
    </ligand>
</feature>
<feature type="binding site" evidence="1">
    <location>
        <position position="1299"/>
    </location>
    <ligand>
        <name>Zn(2+)</name>
        <dbReference type="ChEBI" id="CHEBI:29105"/>
        <label>1</label>
    </ligand>
</feature>
<feature type="binding site" evidence="1">
    <location>
        <position position="1324"/>
    </location>
    <ligand>
        <name>Zn(2+)</name>
        <dbReference type="ChEBI" id="CHEBI:29105"/>
        <label>1</label>
    </ligand>
</feature>
<feature type="binding site" evidence="1">
    <location>
        <position position="1329"/>
    </location>
    <ligand>
        <name>Zn(2+)</name>
        <dbReference type="ChEBI" id="CHEBI:29105"/>
        <label>1</label>
    </ligand>
</feature>
<feature type="binding site" evidence="1">
    <location>
        <position position="1362"/>
    </location>
    <ligand>
        <name>Zn(2+)</name>
        <dbReference type="ChEBI" id="CHEBI:29105"/>
        <label>2</label>
    </ligand>
</feature>
<feature type="binding site" evidence="1">
    <location>
        <position position="1367"/>
    </location>
    <ligand>
        <name>Zn(2+)</name>
        <dbReference type="ChEBI" id="CHEBI:29105"/>
        <label>2</label>
    </ligand>
</feature>
<feature type="binding site" evidence="1">
    <location>
        <position position="1385"/>
    </location>
    <ligand>
        <name>Zn(2+)</name>
        <dbReference type="ChEBI" id="CHEBI:29105"/>
        <label>2</label>
    </ligand>
</feature>
<feature type="binding site" evidence="1">
    <location>
        <position position="1388"/>
    </location>
    <ligand>
        <name>Zn(2+)</name>
        <dbReference type="ChEBI" id="CHEBI:29105"/>
        <label>2</label>
    </ligand>
</feature>
<feature type="modified residue" description="Phosphoserine" evidence="7">
    <location>
        <position position="239"/>
    </location>
</feature>
<feature type="modified residue" description="Phosphoserine" evidence="7">
    <location>
        <position position="262"/>
    </location>
</feature>
<feature type="modified residue" description="Phosphoserine" evidence="7">
    <location>
        <position position="269"/>
    </location>
</feature>
<feature type="modified residue" description="Phosphothreonine" evidence="7">
    <location>
        <position position="314"/>
    </location>
</feature>
<feature type="modified residue" description="Phosphoserine" evidence="7">
    <location>
        <position position="317"/>
    </location>
</feature>
<feature type="sequence conflict" description="In Ref. 2; S48157." evidence="17" ref="2">
    <original>S</original>
    <variation>L</variation>
    <location>
        <position position="99"/>
    </location>
</feature>
<feature type="sequence conflict" description="In Ref. 1; BAA14340 and 3; BAA32745." evidence="17" ref="1 3">
    <original>E</original>
    <variation>A</variation>
    <location>
        <position position="117"/>
    </location>
</feature>
<feature type="sequence conflict" description="In Ref. 2; S48157." evidence="17" ref="2">
    <original>K</original>
    <variation>KK</variation>
    <location>
        <position position="137"/>
    </location>
</feature>
<feature type="sequence conflict" description="In Ref. 2; S48157." evidence="17" ref="2">
    <original>D</original>
    <variation>DD</variation>
    <location>
        <position position="148"/>
    </location>
</feature>
<feature type="sequence conflict" description="In Ref. 1; BAA14340 and 3; BAA32745." evidence="17" ref="1 3">
    <original>I</original>
    <variation>M</variation>
    <location>
        <position position="200"/>
    </location>
</feature>
<feature type="sequence conflict" description="In Ref. 2; S48157." evidence="17" ref="2">
    <original>AEASSDNEMLERILKPKA</original>
    <variation>RRPVAITRCWSAFSPRQ</variation>
    <location>
        <begin position="210"/>
        <end position="227"/>
    </location>
</feature>
<feature type="sequence conflict" description="In Ref. 1; BAA14340 and 3; BAA32745." evidence="17" ref="1 3">
    <original>F</original>
    <variation>L</variation>
    <location>
        <position position="364"/>
    </location>
</feature>
<feature type="sequence conflict" description="In Ref. 1; BAA14340 and 3; BAA32745." evidence="17" ref="1 3">
    <original>M</original>
    <variation>I</variation>
    <location>
        <position position="376"/>
    </location>
</feature>
<feature type="sequence conflict" description="In Ref. 1; BAA14340 and 3; BAA32745." evidence="17" ref="1 3">
    <original>E</original>
    <variation>Q</variation>
    <location>
        <position position="379"/>
    </location>
</feature>
<feature type="sequence conflict" description="In Ref. 1; BAA14340 and 3; BAA32745." evidence="17" ref="1 3">
    <original>K</original>
    <variation>N</variation>
    <location>
        <position position="478"/>
    </location>
</feature>
<feature type="sequence conflict" description="In Ref. 2; S48157." evidence="17" ref="2">
    <original>E</original>
    <variation>G</variation>
    <location>
        <position position="739"/>
    </location>
</feature>
<feature type="sequence conflict" description="In Ref. 1; BAA14340 and 3; BAA32745." evidence="17" ref="1 3">
    <original>FH</original>
    <variation>ST</variation>
    <location>
        <begin position="818"/>
        <end position="819"/>
    </location>
</feature>
<feature type="sequence conflict" description="In Ref. 6; AAL48000." evidence="17" ref="6">
    <original>H</original>
    <variation>Y</variation>
    <location>
        <position position="819"/>
    </location>
</feature>
<feature type="sequence conflict" description="In Ref. 1; BAA14340 and 3; BAA32745." evidence="17" ref="1 3">
    <original>A</original>
    <variation>R</variation>
    <location>
        <position position="842"/>
    </location>
</feature>
<feature type="sequence conflict" description="In Ref. 1; BAA14340 and 3; BAA32745." evidence="17" ref="1 3">
    <original>F</original>
    <variation>L</variation>
    <location>
        <position position="881"/>
    </location>
</feature>
<feature type="sequence conflict" description="In Ref. 1; BAA14340 and 3; BAA32745." evidence="17" ref="1 3">
    <original>TT</original>
    <variation>NP</variation>
    <location>
        <begin position="897"/>
        <end position="898"/>
    </location>
</feature>
<feature type="sequence conflict" description="In Ref. 1; BAA14340 and 3; BAA32745." evidence="17" ref="1 3">
    <original>EI</original>
    <variation>D</variation>
    <location>
        <begin position="992"/>
        <end position="993"/>
    </location>
</feature>
<feature type="sequence conflict" description="In Ref. 1; BAA14340 and 3; BAA32745." evidence="17" ref="1 3">
    <original>EYA</original>
    <variation>DYR</variation>
    <location>
        <begin position="1155"/>
        <end position="1157"/>
    </location>
</feature>
<feature type="sequence conflict" description="In Ref. 2; S48157." evidence="17" ref="2">
    <original>R</original>
    <variation>L</variation>
    <location>
        <position position="1178"/>
    </location>
</feature>
<feature type="sequence conflict" description="In Ref. 1; BAA14340 and 3; BAA32745." evidence="17" ref="1 3">
    <original>YVI</original>
    <variation>LCD</variation>
    <location>
        <begin position="1187"/>
        <end position="1189"/>
    </location>
</feature>
<feature type="sequence conflict" description="In Ref. 2; S48157." evidence="17" ref="2">
    <original>AAMQRAYHL</original>
    <variation>WPCSEHTIS</variation>
    <location>
        <begin position="1197"/>
        <end position="1205"/>
    </location>
</feature>
<feature type="sequence conflict" description="In Ref. 2; S48157." evidence="17" ref="2">
    <original>YY</original>
    <variation>LL</variation>
    <location>
        <begin position="1222"/>
        <end position="1223"/>
    </location>
</feature>
<feature type="sequence conflict" description="In Ref. 2; S48157." evidence="17" ref="2">
    <original>FRFQCVTCKTEQLMASAYR</original>
    <variation>SASSALPVRRSSWRLRTD</variation>
    <location>
        <begin position="1292"/>
        <end position="1310"/>
    </location>
</feature>
<feature type="sequence conflict" description="In Ref. 1; BAA14340." evidence="17" ref="1">
    <original>AKSECQTAPIQYLASVRNQLQLSMRQY</original>
    <variation>VSPSAKRHRFSTWQACAILQLSM</variation>
    <location>
        <begin position="1325"/>
        <end position="1351"/>
    </location>
</feature>
<feature type="sequence conflict" description="In Ref. 2; S48157." evidence="17" ref="2">
    <original>S</original>
    <variation>T</variation>
    <location>
        <position position="1392"/>
    </location>
</feature>
<comment type="function">
    <text evidence="1 8 9 10 11 12 13 15">Catalytic subunit of the DNA polymerase alpha complex (also known as the alpha DNA polymerase-primase complex) which plays an essential role in the initiation of DNA synthesis (PubMed:6403945, PubMed:6409898, PubMed:6773966, PubMed:6806812, PubMed:9858578). During the S phase of the cell cycle, the DNA polymerase alpha complex (composed of a catalytic subunit PolA1, an accessory subunit PolA2 and two primase subunits, the catalytic subunit Prim1 and the regulatory subunit Prim2) is recruited to DNA at the replicative forks (PubMed:6409898, PubMed:6773966, PubMed:6806812, PubMed:9858578). The primase subunit of the polymerase alpha complex initiates DNA synthesis by oligomerising short RNA primers on both leading and lagging strands (By similarity). These primers are initially extended by the polymerase alpha catalytic subunit and subsequently transferred to polymerase delta and polymerase epsilon for processive synthesis on the lagging and leading strand, respectively (By similarity). In addition to polymerase activity, exhibits 3' to 5' exonuclease activity (PubMed:3112771, PubMed:3129427).</text>
</comment>
<comment type="catalytic activity">
    <reaction evidence="11 12 13 14">
        <text>DNA(n) + a 2'-deoxyribonucleoside 5'-triphosphate = DNA(n+1) + diphosphate</text>
        <dbReference type="Rhea" id="RHEA:22508"/>
        <dbReference type="Rhea" id="RHEA-COMP:17339"/>
        <dbReference type="Rhea" id="RHEA-COMP:17340"/>
        <dbReference type="ChEBI" id="CHEBI:33019"/>
        <dbReference type="ChEBI" id="CHEBI:61560"/>
        <dbReference type="ChEBI" id="CHEBI:173112"/>
        <dbReference type="EC" id="2.7.7.7"/>
    </reaction>
</comment>
<comment type="activity regulation">
    <text evidence="9 13">Inhibited by N2-(p-n-butylphenyl) deoxyguanosine 5'-triphosphate and N2-(p-n-butylphenyl) deoxyadenosine 5'-triphosphate (PubMed:3129427). DNA synthesis is not inhibited by fungal toxin alpha-amaitin (PubMed:6806812). The 3'-5' exonuclease activity is inhibited by 10mM dGMP (PubMed:3129427).</text>
</comment>
<comment type="subunit">
    <text evidence="5 10 11 12 14">Component of the alpha DNA polymerase complex (also known as the alpha DNA polymerase-primase complex) consisting of four subunits: the catalytic subunit PolA1, the regulatory subunit PolA2, and the primase complex subunits Prim1 and Prim2 respectively (PubMed:6403945, PubMed:6409898, PubMed:6773966, PubMed:7592543). PolA1 associates with the DNA primase complex before association with PolA2 (PubMed:6409898). Interacts with Dpit47; the interaction inhibits the activity of the DNA polymerase and occurs only in proliferating cells but not in quiescent cells (PubMed:11493638).</text>
</comment>
<comment type="subcellular location">
    <subcellularLocation>
        <location evidence="6 10 15">Nucleus</location>
    </subcellularLocation>
</comment>
<comment type="tissue specificity">
    <text evidence="10 11 12 14">Expressed in embryos (at protein level).</text>
</comment>
<comment type="developmental stage">
    <text evidence="6">Expressed both maternally and zygotically. Highest level of zygotic expression seen in second-instar larva, level is reduced at other stages of development.</text>
</comment>
<comment type="domain">
    <text evidence="2">The CysA-type zinc finger is required for PCNA-binding.</text>
</comment>
<comment type="PTM">
    <text evidence="14">In embryos, a cleaved form of 130 kDa is produced up to cycle 14 and then disappears.</text>
</comment>
<comment type="miscellaneous">
    <text>In eukaryotes there are five DNA polymerases: alpha, beta, gamma, delta, and epsilon which are responsible for different reactions of DNA synthesis.</text>
</comment>
<comment type="similarity">
    <text evidence="17">Belongs to the DNA polymerase type-B family.</text>
</comment>
<comment type="sequence caution" evidence="17">
    <conflict type="erroneous initiation">
        <sequence resource="EMBL-CDS" id="AAL48000"/>
    </conflict>
</comment>
<comment type="sequence caution" evidence="17">
    <conflict type="erroneous gene model prediction">
        <sequence resource="EMBL-CDS" id="BAA14340"/>
    </conflict>
</comment>
<comment type="sequence caution" evidence="17">
    <conflict type="erroneous gene model prediction">
        <sequence resource="EMBL-CDS" id="BAA32745"/>
    </conflict>
</comment>